<evidence type="ECO:0000255" key="1">
    <source>
        <dbReference type="HAMAP-Rule" id="MF_01016"/>
    </source>
</evidence>
<feature type="chain" id="PRO_1000149000" description="Putative transport protein YidE">
    <location>
        <begin position="1"/>
        <end position="553"/>
    </location>
</feature>
<feature type="transmembrane region" description="Helical" evidence="1">
    <location>
        <begin position="4"/>
        <end position="24"/>
    </location>
</feature>
<feature type="transmembrane region" description="Helical" evidence="1">
    <location>
        <begin position="28"/>
        <end position="48"/>
    </location>
</feature>
<feature type="transmembrane region" description="Helical" evidence="1">
    <location>
        <begin position="65"/>
        <end position="85"/>
    </location>
</feature>
<feature type="transmembrane region" description="Helical" evidence="1">
    <location>
        <begin position="95"/>
        <end position="115"/>
    </location>
</feature>
<feature type="transmembrane region" description="Helical" evidence="1">
    <location>
        <begin position="158"/>
        <end position="178"/>
    </location>
</feature>
<feature type="transmembrane region" description="Helical" evidence="1">
    <location>
        <begin position="371"/>
        <end position="391"/>
    </location>
</feature>
<feature type="transmembrane region" description="Helical" evidence="1">
    <location>
        <begin position="393"/>
        <end position="413"/>
    </location>
</feature>
<feature type="transmembrane region" description="Helical" evidence="1">
    <location>
        <begin position="439"/>
        <end position="459"/>
    </location>
</feature>
<feature type="transmembrane region" description="Helical" evidence="1">
    <location>
        <begin position="464"/>
        <end position="484"/>
    </location>
</feature>
<feature type="transmembrane region" description="Helical" evidence="1">
    <location>
        <begin position="493"/>
        <end position="513"/>
    </location>
</feature>
<feature type="transmembrane region" description="Helical" evidence="1">
    <location>
        <begin position="533"/>
        <end position="553"/>
    </location>
</feature>
<feature type="domain" description="RCK C-terminal 1" evidence="1">
    <location>
        <begin position="191"/>
        <end position="276"/>
    </location>
</feature>
<feature type="domain" description="RCK C-terminal 2" evidence="1">
    <location>
        <begin position="279"/>
        <end position="361"/>
    </location>
</feature>
<organism>
    <name type="scientific">Escherichia coli (strain 55989 / EAEC)</name>
    <dbReference type="NCBI Taxonomy" id="585055"/>
    <lineage>
        <taxon>Bacteria</taxon>
        <taxon>Pseudomonadati</taxon>
        <taxon>Pseudomonadota</taxon>
        <taxon>Gammaproteobacteria</taxon>
        <taxon>Enterobacterales</taxon>
        <taxon>Enterobacteriaceae</taxon>
        <taxon>Escherichia</taxon>
    </lineage>
</organism>
<protein>
    <recommendedName>
        <fullName evidence="1">Putative transport protein YidE</fullName>
    </recommendedName>
</protein>
<name>YIDE_ECO55</name>
<dbReference type="EMBL" id="CU928145">
    <property type="protein sequence ID" value="CAV00730.1"/>
    <property type="molecule type" value="Genomic_DNA"/>
</dbReference>
<dbReference type="RefSeq" id="WP_001279752.1">
    <property type="nucleotide sequence ID" value="NC_011748.1"/>
</dbReference>
<dbReference type="SMR" id="B7L824"/>
<dbReference type="TCDB" id="2.A.81.1.5">
    <property type="family name" value="the aspartate:alanine exchanger (aaex) family"/>
</dbReference>
<dbReference type="KEGG" id="eck:EC55989_4154"/>
<dbReference type="HOGENOM" id="CLU_035023_3_1_6"/>
<dbReference type="Proteomes" id="UP000000746">
    <property type="component" value="Chromosome"/>
</dbReference>
<dbReference type="GO" id="GO:0005886">
    <property type="term" value="C:plasma membrane"/>
    <property type="evidence" value="ECO:0007669"/>
    <property type="project" value="UniProtKB-SubCell"/>
</dbReference>
<dbReference type="GO" id="GO:0008324">
    <property type="term" value="F:monoatomic cation transmembrane transporter activity"/>
    <property type="evidence" value="ECO:0007669"/>
    <property type="project" value="InterPro"/>
</dbReference>
<dbReference type="GO" id="GO:0006813">
    <property type="term" value="P:potassium ion transport"/>
    <property type="evidence" value="ECO:0007669"/>
    <property type="project" value="InterPro"/>
</dbReference>
<dbReference type="FunFam" id="3.30.70.1450:FF:000004">
    <property type="entry name" value="Putative transport protein YidE"/>
    <property type="match status" value="1"/>
</dbReference>
<dbReference type="Gene3D" id="3.30.70.1450">
    <property type="entry name" value="Regulator of K+ conductance, C-terminal domain"/>
    <property type="match status" value="2"/>
</dbReference>
<dbReference type="HAMAP" id="MF_01016">
    <property type="entry name" value="YidE"/>
    <property type="match status" value="1"/>
</dbReference>
<dbReference type="InterPro" id="IPR050144">
    <property type="entry name" value="AAE_transporter"/>
</dbReference>
<dbReference type="InterPro" id="IPR006037">
    <property type="entry name" value="RCK_C"/>
</dbReference>
<dbReference type="InterPro" id="IPR036721">
    <property type="entry name" value="RCK_C_sf"/>
</dbReference>
<dbReference type="InterPro" id="IPR023018">
    <property type="entry name" value="Transpt_YidE_put"/>
</dbReference>
<dbReference type="InterPro" id="IPR006512">
    <property type="entry name" value="YidE_YbjL"/>
</dbReference>
<dbReference type="NCBIfam" id="NF003007">
    <property type="entry name" value="PRK03818.1"/>
    <property type="match status" value="1"/>
</dbReference>
<dbReference type="NCBIfam" id="TIGR01625">
    <property type="entry name" value="YidE_YbjL_dupl"/>
    <property type="match status" value="2"/>
</dbReference>
<dbReference type="PANTHER" id="PTHR30445">
    <property type="entry name" value="K(+)_H(+) ANTIPORTER SUBUNIT KHTT"/>
    <property type="match status" value="1"/>
</dbReference>
<dbReference type="PANTHER" id="PTHR30445:SF3">
    <property type="entry name" value="TRANSPORT PROTEIN YIDE-RELATED"/>
    <property type="match status" value="1"/>
</dbReference>
<dbReference type="Pfam" id="PF06826">
    <property type="entry name" value="Asp-Al_Ex"/>
    <property type="match status" value="2"/>
</dbReference>
<dbReference type="Pfam" id="PF02080">
    <property type="entry name" value="TrkA_C"/>
    <property type="match status" value="2"/>
</dbReference>
<dbReference type="SUPFAM" id="SSF116726">
    <property type="entry name" value="TrkA C-terminal domain-like"/>
    <property type="match status" value="2"/>
</dbReference>
<dbReference type="PROSITE" id="PS51202">
    <property type="entry name" value="RCK_C"/>
    <property type="match status" value="2"/>
</dbReference>
<accession>B7L824</accession>
<reference key="1">
    <citation type="journal article" date="2009" name="PLoS Genet.">
        <title>Organised genome dynamics in the Escherichia coli species results in highly diverse adaptive paths.</title>
        <authorList>
            <person name="Touchon M."/>
            <person name="Hoede C."/>
            <person name="Tenaillon O."/>
            <person name="Barbe V."/>
            <person name="Baeriswyl S."/>
            <person name="Bidet P."/>
            <person name="Bingen E."/>
            <person name="Bonacorsi S."/>
            <person name="Bouchier C."/>
            <person name="Bouvet O."/>
            <person name="Calteau A."/>
            <person name="Chiapello H."/>
            <person name="Clermont O."/>
            <person name="Cruveiller S."/>
            <person name="Danchin A."/>
            <person name="Diard M."/>
            <person name="Dossat C."/>
            <person name="Karoui M.E."/>
            <person name="Frapy E."/>
            <person name="Garry L."/>
            <person name="Ghigo J.M."/>
            <person name="Gilles A.M."/>
            <person name="Johnson J."/>
            <person name="Le Bouguenec C."/>
            <person name="Lescat M."/>
            <person name="Mangenot S."/>
            <person name="Martinez-Jehanne V."/>
            <person name="Matic I."/>
            <person name="Nassif X."/>
            <person name="Oztas S."/>
            <person name="Petit M.A."/>
            <person name="Pichon C."/>
            <person name="Rouy Z."/>
            <person name="Ruf C.S."/>
            <person name="Schneider D."/>
            <person name="Tourret J."/>
            <person name="Vacherie B."/>
            <person name="Vallenet D."/>
            <person name="Medigue C."/>
            <person name="Rocha E.P.C."/>
            <person name="Denamur E."/>
        </authorList>
    </citation>
    <scope>NUCLEOTIDE SEQUENCE [LARGE SCALE GENOMIC DNA]</scope>
    <source>
        <strain>55989 / EAEC</strain>
    </source>
</reference>
<gene>
    <name evidence="1" type="primary">yidE</name>
    <name type="ordered locus">EC55989_4154</name>
</gene>
<comment type="subcellular location">
    <subcellularLocation>
        <location evidence="1">Cell membrane</location>
        <topology evidence="1">Multi-pass membrane protein</topology>
    </subcellularLocation>
</comment>
<comment type="similarity">
    <text evidence="1">Belongs to the AAE transporter (TC 2.A.81) family. YidE subfamily.</text>
</comment>
<sequence>MSDIALTVSILALVAVVGLFIGNVKFRGIGLGIGGVLFGGIIVGHFVSQAGMTLSSDMLHVIQEFGLILFVYTIGIQVGPGFFASLRVSGLRLNLFAVLIVIIGGLVTAILHKLFDIPLPVVLGIFSGAVTNTPALGAGQQILRDLGTPMEMVDQMGMSYAMAYPFGICGILFTMWMLRVIFRVNVETEAQQHESSRTNGGALIKTINIRVENPNLHDLAIKDVPILNGDKIICSRLKREETLKVPSPDTIIQLGDLLHLVGQPADLHNAQLVIGQEVDTSLSTKGTDLRVERVVVTNENVLGKRIRDLHFKERYDVVISRLNRAGVELVASGDISLQFGDILNLVGRPSAIDAVANVLGNAQQKLQQVQMLPVFIGIGLGVLLGSIPVFVPGFPAALKLGLAGGPLIMALILGRIGSIGKLYWFMPPSANLALRELGIVLFLSVVGLKSGGDFVNTLVNGEGLSWIGYGALITAVPLITVGILARMLAKMNYLTMCGMLAGSMTDPPALAFANNLHPTSGAAALSYATVYPLVMFLRIITPQLLAVLFWSIG</sequence>
<proteinExistence type="inferred from homology"/>
<keyword id="KW-1003">Cell membrane</keyword>
<keyword id="KW-0472">Membrane</keyword>
<keyword id="KW-1185">Reference proteome</keyword>
<keyword id="KW-0677">Repeat</keyword>
<keyword id="KW-0812">Transmembrane</keyword>
<keyword id="KW-1133">Transmembrane helix</keyword>
<keyword id="KW-0813">Transport</keyword>